<comment type="similarity">
    <text evidence="1">Belongs to the bacterial ribosomal protein bL35 family.</text>
</comment>
<gene>
    <name evidence="1" type="primary">rpmI</name>
    <name type="ordered locus">Shewana3_2045</name>
</gene>
<reference key="1">
    <citation type="submission" date="2006-09" db="EMBL/GenBank/DDBJ databases">
        <title>Complete sequence of chromosome 1 of Shewanella sp. ANA-3.</title>
        <authorList>
            <person name="Copeland A."/>
            <person name="Lucas S."/>
            <person name="Lapidus A."/>
            <person name="Barry K."/>
            <person name="Detter J.C."/>
            <person name="Glavina del Rio T."/>
            <person name="Hammon N."/>
            <person name="Israni S."/>
            <person name="Dalin E."/>
            <person name="Tice H."/>
            <person name="Pitluck S."/>
            <person name="Chertkov O."/>
            <person name="Brettin T."/>
            <person name="Bruce D."/>
            <person name="Han C."/>
            <person name="Tapia R."/>
            <person name="Gilna P."/>
            <person name="Schmutz J."/>
            <person name="Larimer F."/>
            <person name="Land M."/>
            <person name="Hauser L."/>
            <person name="Kyrpides N."/>
            <person name="Kim E."/>
            <person name="Newman D."/>
            <person name="Salticov C."/>
            <person name="Konstantinidis K."/>
            <person name="Klappenback J."/>
            <person name="Tiedje J."/>
            <person name="Richardson P."/>
        </authorList>
    </citation>
    <scope>NUCLEOTIDE SEQUENCE [LARGE SCALE GENOMIC DNA]</scope>
    <source>
        <strain>ANA-3</strain>
    </source>
</reference>
<name>RL35_SHESA</name>
<organism>
    <name type="scientific">Shewanella sp. (strain ANA-3)</name>
    <dbReference type="NCBI Taxonomy" id="94122"/>
    <lineage>
        <taxon>Bacteria</taxon>
        <taxon>Pseudomonadati</taxon>
        <taxon>Pseudomonadota</taxon>
        <taxon>Gammaproteobacteria</taxon>
        <taxon>Alteromonadales</taxon>
        <taxon>Shewanellaceae</taxon>
        <taxon>Shewanella</taxon>
    </lineage>
</organism>
<accession>A0KWV6</accession>
<protein>
    <recommendedName>
        <fullName evidence="1">Large ribosomal subunit protein bL35</fullName>
    </recommendedName>
    <alternativeName>
        <fullName evidence="2">50S ribosomal protein L35</fullName>
    </alternativeName>
</protein>
<keyword id="KW-0687">Ribonucleoprotein</keyword>
<keyword id="KW-0689">Ribosomal protein</keyword>
<sequence length="64" mass="7466">MPKMKTDRGVAKRFKKTANGFKRKQAHLRHILTKKSTKRKRHLRNKCLVAKVDVPAIARQLPYA</sequence>
<feature type="chain" id="PRO_1000050766" description="Large ribosomal subunit protein bL35">
    <location>
        <begin position="1"/>
        <end position="64"/>
    </location>
</feature>
<proteinExistence type="inferred from homology"/>
<evidence type="ECO:0000255" key="1">
    <source>
        <dbReference type="HAMAP-Rule" id="MF_00514"/>
    </source>
</evidence>
<evidence type="ECO:0000305" key="2"/>
<dbReference type="EMBL" id="CP000469">
    <property type="protein sequence ID" value="ABK48275.1"/>
    <property type="molecule type" value="Genomic_DNA"/>
</dbReference>
<dbReference type="RefSeq" id="WP_011072303.1">
    <property type="nucleotide sequence ID" value="NC_008577.1"/>
</dbReference>
<dbReference type="SMR" id="A0KWV6"/>
<dbReference type="STRING" id="94122.Shewana3_2045"/>
<dbReference type="GeneID" id="94727989"/>
<dbReference type="KEGG" id="shn:Shewana3_2045"/>
<dbReference type="eggNOG" id="COG0291">
    <property type="taxonomic scope" value="Bacteria"/>
</dbReference>
<dbReference type="HOGENOM" id="CLU_169643_1_1_6"/>
<dbReference type="OrthoDB" id="47476at2"/>
<dbReference type="Proteomes" id="UP000002589">
    <property type="component" value="Chromosome"/>
</dbReference>
<dbReference type="GO" id="GO:0022625">
    <property type="term" value="C:cytosolic large ribosomal subunit"/>
    <property type="evidence" value="ECO:0007669"/>
    <property type="project" value="TreeGrafter"/>
</dbReference>
<dbReference type="GO" id="GO:0003735">
    <property type="term" value="F:structural constituent of ribosome"/>
    <property type="evidence" value="ECO:0007669"/>
    <property type="project" value="InterPro"/>
</dbReference>
<dbReference type="GO" id="GO:0006412">
    <property type="term" value="P:translation"/>
    <property type="evidence" value="ECO:0007669"/>
    <property type="project" value="UniProtKB-UniRule"/>
</dbReference>
<dbReference type="FunFam" id="4.10.410.60:FF:000001">
    <property type="entry name" value="50S ribosomal protein L35"/>
    <property type="match status" value="1"/>
</dbReference>
<dbReference type="Gene3D" id="4.10.410.60">
    <property type="match status" value="1"/>
</dbReference>
<dbReference type="HAMAP" id="MF_00514">
    <property type="entry name" value="Ribosomal_bL35"/>
    <property type="match status" value="1"/>
</dbReference>
<dbReference type="InterPro" id="IPR001706">
    <property type="entry name" value="Ribosomal_bL35"/>
</dbReference>
<dbReference type="InterPro" id="IPR021137">
    <property type="entry name" value="Ribosomal_bL35-like"/>
</dbReference>
<dbReference type="InterPro" id="IPR018265">
    <property type="entry name" value="Ribosomal_bL35_CS"/>
</dbReference>
<dbReference type="InterPro" id="IPR037229">
    <property type="entry name" value="Ribosomal_bL35_sf"/>
</dbReference>
<dbReference type="NCBIfam" id="TIGR00001">
    <property type="entry name" value="rpmI_bact"/>
    <property type="match status" value="1"/>
</dbReference>
<dbReference type="PANTHER" id="PTHR33343">
    <property type="entry name" value="54S RIBOSOMAL PROTEIN BL35M"/>
    <property type="match status" value="1"/>
</dbReference>
<dbReference type="PANTHER" id="PTHR33343:SF1">
    <property type="entry name" value="LARGE RIBOSOMAL SUBUNIT PROTEIN BL35M"/>
    <property type="match status" value="1"/>
</dbReference>
<dbReference type="Pfam" id="PF01632">
    <property type="entry name" value="Ribosomal_L35p"/>
    <property type="match status" value="1"/>
</dbReference>
<dbReference type="PRINTS" id="PR00064">
    <property type="entry name" value="RIBOSOMALL35"/>
</dbReference>
<dbReference type="SUPFAM" id="SSF143034">
    <property type="entry name" value="L35p-like"/>
    <property type="match status" value="1"/>
</dbReference>
<dbReference type="PROSITE" id="PS00936">
    <property type="entry name" value="RIBOSOMAL_L35"/>
    <property type="match status" value="1"/>
</dbReference>